<feature type="chain" id="PRO_1000216200" description="Urease subunit alpha">
    <location>
        <begin position="1"/>
        <end position="567"/>
    </location>
</feature>
<feature type="domain" description="Urease" evidence="1">
    <location>
        <begin position="129"/>
        <end position="567"/>
    </location>
</feature>
<feature type="active site" description="Proton donor" evidence="1">
    <location>
        <position position="320"/>
    </location>
</feature>
<feature type="binding site" evidence="1">
    <location>
        <position position="134"/>
    </location>
    <ligand>
        <name>Ni(2+)</name>
        <dbReference type="ChEBI" id="CHEBI:49786"/>
        <label>1</label>
    </ligand>
</feature>
<feature type="binding site" evidence="1">
    <location>
        <position position="136"/>
    </location>
    <ligand>
        <name>Ni(2+)</name>
        <dbReference type="ChEBI" id="CHEBI:49786"/>
        <label>1</label>
    </ligand>
</feature>
<feature type="binding site" description="via carbamate group" evidence="1">
    <location>
        <position position="217"/>
    </location>
    <ligand>
        <name>Ni(2+)</name>
        <dbReference type="ChEBI" id="CHEBI:49786"/>
        <label>1</label>
    </ligand>
</feature>
<feature type="binding site" description="via carbamate group" evidence="1">
    <location>
        <position position="217"/>
    </location>
    <ligand>
        <name>Ni(2+)</name>
        <dbReference type="ChEBI" id="CHEBI:49786"/>
        <label>2</label>
    </ligand>
</feature>
<feature type="binding site" evidence="1">
    <location>
        <position position="219"/>
    </location>
    <ligand>
        <name>substrate</name>
    </ligand>
</feature>
<feature type="binding site" evidence="1">
    <location>
        <position position="246"/>
    </location>
    <ligand>
        <name>Ni(2+)</name>
        <dbReference type="ChEBI" id="CHEBI:49786"/>
        <label>2</label>
    </ligand>
</feature>
<feature type="binding site" evidence="1">
    <location>
        <position position="272"/>
    </location>
    <ligand>
        <name>Ni(2+)</name>
        <dbReference type="ChEBI" id="CHEBI:49786"/>
        <label>2</label>
    </ligand>
</feature>
<feature type="binding site" evidence="1">
    <location>
        <position position="360"/>
    </location>
    <ligand>
        <name>Ni(2+)</name>
        <dbReference type="ChEBI" id="CHEBI:49786"/>
        <label>1</label>
    </ligand>
</feature>
<feature type="modified residue" description="N6-carboxylysine" evidence="1">
    <location>
        <position position="217"/>
    </location>
</feature>
<dbReference type="EC" id="3.5.1.5" evidence="1"/>
<dbReference type="EMBL" id="CP001616">
    <property type="protein sequence ID" value="ACQ93230.1"/>
    <property type="molecule type" value="Genomic_DNA"/>
</dbReference>
<dbReference type="RefSeq" id="WP_015878701.1">
    <property type="nucleotide sequence ID" value="NC_012691.1"/>
</dbReference>
<dbReference type="SMR" id="C4LF63"/>
<dbReference type="STRING" id="595494.Tola_1619"/>
<dbReference type="KEGG" id="tau:Tola_1619"/>
<dbReference type="eggNOG" id="COG0804">
    <property type="taxonomic scope" value="Bacteria"/>
</dbReference>
<dbReference type="HOGENOM" id="CLU_000980_0_0_6"/>
<dbReference type="OrthoDB" id="9802793at2"/>
<dbReference type="UniPathway" id="UPA00258">
    <property type="reaction ID" value="UER00370"/>
</dbReference>
<dbReference type="Proteomes" id="UP000009073">
    <property type="component" value="Chromosome"/>
</dbReference>
<dbReference type="GO" id="GO:0005737">
    <property type="term" value="C:cytoplasm"/>
    <property type="evidence" value="ECO:0007669"/>
    <property type="project" value="UniProtKB-SubCell"/>
</dbReference>
<dbReference type="GO" id="GO:0016151">
    <property type="term" value="F:nickel cation binding"/>
    <property type="evidence" value="ECO:0007669"/>
    <property type="project" value="UniProtKB-UniRule"/>
</dbReference>
<dbReference type="GO" id="GO:0009039">
    <property type="term" value="F:urease activity"/>
    <property type="evidence" value="ECO:0007669"/>
    <property type="project" value="UniProtKB-UniRule"/>
</dbReference>
<dbReference type="GO" id="GO:0043419">
    <property type="term" value="P:urea catabolic process"/>
    <property type="evidence" value="ECO:0007669"/>
    <property type="project" value="UniProtKB-UniRule"/>
</dbReference>
<dbReference type="CDD" id="cd00375">
    <property type="entry name" value="Urease_alpha"/>
    <property type="match status" value="1"/>
</dbReference>
<dbReference type="Gene3D" id="3.20.20.140">
    <property type="entry name" value="Metal-dependent hydrolases"/>
    <property type="match status" value="1"/>
</dbReference>
<dbReference type="Gene3D" id="2.30.40.10">
    <property type="entry name" value="Urease, subunit C, domain 1"/>
    <property type="match status" value="1"/>
</dbReference>
<dbReference type="HAMAP" id="MF_01953">
    <property type="entry name" value="Urease_alpha"/>
    <property type="match status" value="1"/>
</dbReference>
<dbReference type="InterPro" id="IPR006680">
    <property type="entry name" value="Amidohydro-rel"/>
</dbReference>
<dbReference type="InterPro" id="IPR011059">
    <property type="entry name" value="Metal-dep_hydrolase_composite"/>
</dbReference>
<dbReference type="InterPro" id="IPR032466">
    <property type="entry name" value="Metal_Hydrolase"/>
</dbReference>
<dbReference type="InterPro" id="IPR011612">
    <property type="entry name" value="Urease_alpha_N_dom"/>
</dbReference>
<dbReference type="InterPro" id="IPR050112">
    <property type="entry name" value="Urease_alpha_subunit"/>
</dbReference>
<dbReference type="InterPro" id="IPR017950">
    <property type="entry name" value="Urease_AS"/>
</dbReference>
<dbReference type="InterPro" id="IPR005848">
    <property type="entry name" value="Urease_asu"/>
</dbReference>
<dbReference type="InterPro" id="IPR017951">
    <property type="entry name" value="Urease_asu_c"/>
</dbReference>
<dbReference type="InterPro" id="IPR029754">
    <property type="entry name" value="Urease_Ni-bd"/>
</dbReference>
<dbReference type="NCBIfam" id="NF009685">
    <property type="entry name" value="PRK13206.1"/>
    <property type="match status" value="1"/>
</dbReference>
<dbReference type="NCBIfam" id="NF009686">
    <property type="entry name" value="PRK13207.1"/>
    <property type="match status" value="1"/>
</dbReference>
<dbReference type="NCBIfam" id="TIGR01792">
    <property type="entry name" value="urease_alph"/>
    <property type="match status" value="1"/>
</dbReference>
<dbReference type="PANTHER" id="PTHR43440">
    <property type="entry name" value="UREASE"/>
    <property type="match status" value="1"/>
</dbReference>
<dbReference type="PANTHER" id="PTHR43440:SF1">
    <property type="entry name" value="UREASE"/>
    <property type="match status" value="1"/>
</dbReference>
<dbReference type="Pfam" id="PF01979">
    <property type="entry name" value="Amidohydro_1"/>
    <property type="match status" value="1"/>
</dbReference>
<dbReference type="Pfam" id="PF00449">
    <property type="entry name" value="Urease_alpha"/>
    <property type="match status" value="1"/>
</dbReference>
<dbReference type="PRINTS" id="PR01752">
    <property type="entry name" value="UREASE"/>
</dbReference>
<dbReference type="SUPFAM" id="SSF51338">
    <property type="entry name" value="Composite domain of metallo-dependent hydrolases"/>
    <property type="match status" value="2"/>
</dbReference>
<dbReference type="SUPFAM" id="SSF51556">
    <property type="entry name" value="Metallo-dependent hydrolases"/>
    <property type="match status" value="1"/>
</dbReference>
<dbReference type="PROSITE" id="PS01120">
    <property type="entry name" value="UREASE_1"/>
    <property type="match status" value="1"/>
</dbReference>
<dbReference type="PROSITE" id="PS00145">
    <property type="entry name" value="UREASE_2"/>
    <property type="match status" value="1"/>
</dbReference>
<dbReference type="PROSITE" id="PS51368">
    <property type="entry name" value="UREASE_3"/>
    <property type="match status" value="1"/>
</dbReference>
<evidence type="ECO:0000255" key="1">
    <source>
        <dbReference type="HAMAP-Rule" id="MF_01953"/>
    </source>
</evidence>
<accession>C4LF63</accession>
<proteinExistence type="inferred from homology"/>
<sequence>MSIISRQAYADMFGPTTGDRVRLADTELWLEVEKDFTIYGDEVKFGGGKVIRDGQGQGQALSRDCLDLVITNALIIDHWGIVKADIGVKNGRIAGIGKAGNPDVQPGVTLVIGPGTEVIAGEGSIVTAGGIDSHIHFICPQQIDEALCSGVTTMLGGGTGPATGTNATTCTPGPWYMARMLEAAESLPMNLGFLGKGNASLPDALHEQVAAGAIGLKLHEDWGSTPASINNCLNVAEETDTQVAIHTDTLNESGFVEDTLAAIGDRTIHTYHTEGAGGGHAPDIIRACGLANVLPSSTNPTRPYTVNTVDEHLDMLMVCHHLDPAIPEDVAFAESRIRRETIAAEDILHDLGAFSMISSDSQAMGRVGEVITRTWQTAHKMKVQRGSLGSDPARHDNTRIKRYIAKYTINPALAHGISHEVGSIEPGKLADLVLWRPAFFGVKPSMILKGGMIAAAPMGDANASIPTPQPVHFRPMFGALGRAMHSTRMTFLSGLAIRSGLPAQLGLNSLIGEVKNCRSVKKAHMIHNDWQPLIEVDSQTYQVRANGELLTCEPAAVLPMAQRYFLF</sequence>
<keyword id="KW-0963">Cytoplasm</keyword>
<keyword id="KW-0378">Hydrolase</keyword>
<keyword id="KW-0479">Metal-binding</keyword>
<keyword id="KW-0533">Nickel</keyword>
<keyword id="KW-1185">Reference proteome</keyword>
<name>URE1_TOLAT</name>
<comment type="catalytic activity">
    <reaction evidence="1">
        <text>urea + 2 H2O + H(+) = hydrogencarbonate + 2 NH4(+)</text>
        <dbReference type="Rhea" id="RHEA:20557"/>
        <dbReference type="ChEBI" id="CHEBI:15377"/>
        <dbReference type="ChEBI" id="CHEBI:15378"/>
        <dbReference type="ChEBI" id="CHEBI:16199"/>
        <dbReference type="ChEBI" id="CHEBI:17544"/>
        <dbReference type="ChEBI" id="CHEBI:28938"/>
        <dbReference type="EC" id="3.5.1.5"/>
    </reaction>
</comment>
<comment type="cofactor">
    <cofactor evidence="1">
        <name>Ni cation</name>
        <dbReference type="ChEBI" id="CHEBI:25516"/>
    </cofactor>
    <text evidence="1">Binds 2 nickel ions per subunit.</text>
</comment>
<comment type="pathway">
    <text evidence="1">Nitrogen metabolism; urea degradation; CO(2) and NH(3) from urea (urease route): step 1/1.</text>
</comment>
<comment type="subunit">
    <text evidence="1">Heterotrimer of UreA (gamma), UreB (beta) and UreC (alpha) subunits. Three heterotrimers associate to form the active enzyme.</text>
</comment>
<comment type="subcellular location">
    <subcellularLocation>
        <location evidence="1">Cytoplasm</location>
    </subcellularLocation>
</comment>
<comment type="PTM">
    <text evidence="1">Carboxylation allows a single lysine to coordinate two nickel ions.</text>
</comment>
<comment type="similarity">
    <text evidence="1">Belongs to the metallo-dependent hydrolases superfamily. Urease alpha subunit family.</text>
</comment>
<gene>
    <name evidence="1" type="primary">ureC</name>
    <name type="ordered locus">Tola_1619</name>
</gene>
<organism>
    <name type="scientific">Tolumonas auensis (strain DSM 9187 / NBRC 110442 / TA 4)</name>
    <dbReference type="NCBI Taxonomy" id="595494"/>
    <lineage>
        <taxon>Bacteria</taxon>
        <taxon>Pseudomonadati</taxon>
        <taxon>Pseudomonadota</taxon>
        <taxon>Gammaproteobacteria</taxon>
        <taxon>Aeromonadales</taxon>
        <taxon>Aeromonadaceae</taxon>
        <taxon>Tolumonas</taxon>
    </lineage>
</organism>
<reference key="1">
    <citation type="submission" date="2009-05" db="EMBL/GenBank/DDBJ databases">
        <title>Complete sequence of Tolumonas auensis DSM 9187.</title>
        <authorList>
            <consortium name="US DOE Joint Genome Institute"/>
            <person name="Lucas S."/>
            <person name="Copeland A."/>
            <person name="Lapidus A."/>
            <person name="Glavina del Rio T."/>
            <person name="Tice H."/>
            <person name="Bruce D."/>
            <person name="Goodwin L."/>
            <person name="Pitluck S."/>
            <person name="Chertkov O."/>
            <person name="Brettin T."/>
            <person name="Detter J.C."/>
            <person name="Han C."/>
            <person name="Larimer F."/>
            <person name="Land M."/>
            <person name="Hauser L."/>
            <person name="Kyrpides N."/>
            <person name="Mikhailova N."/>
            <person name="Spring S."/>
            <person name="Beller H."/>
        </authorList>
    </citation>
    <scope>NUCLEOTIDE SEQUENCE [LARGE SCALE GENOMIC DNA]</scope>
    <source>
        <strain>DSM 9187 / NBRC 110442 / TA 4</strain>
    </source>
</reference>
<protein>
    <recommendedName>
        <fullName evidence="1">Urease subunit alpha</fullName>
        <ecNumber evidence="1">3.5.1.5</ecNumber>
    </recommendedName>
    <alternativeName>
        <fullName evidence="1">Urea amidohydrolase subunit alpha</fullName>
    </alternativeName>
</protein>